<keyword id="KW-0997">Cell inner membrane</keyword>
<keyword id="KW-1003">Cell membrane</keyword>
<keyword id="KW-0963">Cytoplasm</keyword>
<keyword id="KW-0342">GTP-binding</keyword>
<keyword id="KW-0472">Membrane</keyword>
<keyword id="KW-0547">Nucleotide-binding</keyword>
<keyword id="KW-0690">Ribosome biogenesis</keyword>
<keyword id="KW-0694">RNA-binding</keyword>
<keyword id="KW-0699">rRNA-binding</keyword>
<name>ERA_ECOL5</name>
<evidence type="ECO:0000255" key="1">
    <source>
        <dbReference type="HAMAP-Rule" id="MF_00367"/>
    </source>
</evidence>
<evidence type="ECO:0000255" key="2">
    <source>
        <dbReference type="PROSITE-ProRule" id="PRU01050"/>
    </source>
</evidence>
<sequence length="301" mass="33796">MSIDKSYCGFIAIVGRPNVGKSTLLNKLLGQKISITSRKAQTTRHRIVGIHTEGAYQAIYVDTPGLHMEEKRAINRLMNKAASSSIGDVELVIFVVEGTRWTPDDEMVLNKLRDGKAPVILAVNKVDNVQEKADLLPHLQFLASQMNFLDIVPISAETGLNVDTIAAIVRKHLPEATHHFPEDYITDRSQRFMASEIIREKLMRFLGAELPYSVTVEIERFVSNERGGYDINGLILVEREGQKKMVIGNKGAKIKTIGIEARKDMQEMFEAPVHLELWVKVKSGWADDERALRSLGYVDDL</sequence>
<organism>
    <name type="scientific">Escherichia coli O6:K15:H31 (strain 536 / UPEC)</name>
    <dbReference type="NCBI Taxonomy" id="362663"/>
    <lineage>
        <taxon>Bacteria</taxon>
        <taxon>Pseudomonadati</taxon>
        <taxon>Pseudomonadota</taxon>
        <taxon>Gammaproteobacteria</taxon>
        <taxon>Enterobacterales</taxon>
        <taxon>Enterobacteriaceae</taxon>
        <taxon>Escherichia</taxon>
    </lineage>
</organism>
<accession>Q0TES2</accession>
<protein>
    <recommendedName>
        <fullName evidence="1">GTPase Era</fullName>
    </recommendedName>
</protein>
<feature type="chain" id="PRO_1000079689" description="GTPase Era">
    <location>
        <begin position="1"/>
        <end position="301"/>
    </location>
</feature>
<feature type="domain" description="Era-type G" evidence="2">
    <location>
        <begin position="7"/>
        <end position="175"/>
    </location>
</feature>
<feature type="domain" description="KH type-2" evidence="1">
    <location>
        <begin position="206"/>
        <end position="283"/>
    </location>
</feature>
<feature type="region of interest" description="G1" evidence="2">
    <location>
        <begin position="15"/>
        <end position="22"/>
    </location>
</feature>
<feature type="region of interest" description="G2" evidence="2">
    <location>
        <begin position="41"/>
        <end position="45"/>
    </location>
</feature>
<feature type="region of interest" description="G3" evidence="2">
    <location>
        <begin position="62"/>
        <end position="65"/>
    </location>
</feature>
<feature type="region of interest" description="G4" evidence="2">
    <location>
        <begin position="124"/>
        <end position="127"/>
    </location>
</feature>
<feature type="region of interest" description="G5" evidence="2">
    <location>
        <begin position="154"/>
        <end position="156"/>
    </location>
</feature>
<feature type="binding site" evidence="1">
    <location>
        <begin position="15"/>
        <end position="22"/>
    </location>
    <ligand>
        <name>GTP</name>
        <dbReference type="ChEBI" id="CHEBI:37565"/>
    </ligand>
</feature>
<feature type="binding site" evidence="1">
    <location>
        <begin position="62"/>
        <end position="66"/>
    </location>
    <ligand>
        <name>GTP</name>
        <dbReference type="ChEBI" id="CHEBI:37565"/>
    </ligand>
</feature>
<feature type="binding site" evidence="1">
    <location>
        <begin position="124"/>
        <end position="127"/>
    </location>
    <ligand>
        <name>GTP</name>
        <dbReference type="ChEBI" id="CHEBI:37565"/>
    </ligand>
</feature>
<comment type="function">
    <text evidence="1">An essential GTPase that binds both GDP and GTP, with rapid nucleotide exchange. Plays a role in 16S rRNA processing and 30S ribosomal subunit biogenesis and possibly also in cell cycle regulation and energy metabolism.</text>
</comment>
<comment type="subunit">
    <text evidence="1">Monomer.</text>
</comment>
<comment type="subcellular location">
    <subcellularLocation>
        <location>Cytoplasm</location>
    </subcellularLocation>
    <subcellularLocation>
        <location evidence="1">Cell inner membrane</location>
        <topology evidence="1">Peripheral membrane protein</topology>
    </subcellularLocation>
</comment>
<comment type="similarity">
    <text evidence="1 2">Belongs to the TRAFAC class TrmE-Era-EngA-EngB-Septin-like GTPase superfamily. Era GTPase family.</text>
</comment>
<gene>
    <name evidence="1" type="primary">era</name>
    <name type="ordered locus">ECP_2568</name>
</gene>
<proteinExistence type="inferred from homology"/>
<dbReference type="EMBL" id="CP000247">
    <property type="protein sequence ID" value="ABG70557.1"/>
    <property type="molecule type" value="Genomic_DNA"/>
</dbReference>
<dbReference type="RefSeq" id="WP_000020737.1">
    <property type="nucleotide sequence ID" value="NC_008253.1"/>
</dbReference>
<dbReference type="SMR" id="Q0TES2"/>
<dbReference type="GeneID" id="93774525"/>
<dbReference type="KEGG" id="ecp:ECP_2568"/>
<dbReference type="HOGENOM" id="CLU_038009_1_2_6"/>
<dbReference type="Proteomes" id="UP000009182">
    <property type="component" value="Chromosome"/>
</dbReference>
<dbReference type="GO" id="GO:0005829">
    <property type="term" value="C:cytosol"/>
    <property type="evidence" value="ECO:0007669"/>
    <property type="project" value="TreeGrafter"/>
</dbReference>
<dbReference type="GO" id="GO:0005886">
    <property type="term" value="C:plasma membrane"/>
    <property type="evidence" value="ECO:0007669"/>
    <property type="project" value="UniProtKB-SubCell"/>
</dbReference>
<dbReference type="GO" id="GO:0005525">
    <property type="term" value="F:GTP binding"/>
    <property type="evidence" value="ECO:0007669"/>
    <property type="project" value="UniProtKB-UniRule"/>
</dbReference>
<dbReference type="GO" id="GO:0003924">
    <property type="term" value="F:GTPase activity"/>
    <property type="evidence" value="ECO:0007669"/>
    <property type="project" value="UniProtKB-UniRule"/>
</dbReference>
<dbReference type="GO" id="GO:0043024">
    <property type="term" value="F:ribosomal small subunit binding"/>
    <property type="evidence" value="ECO:0007669"/>
    <property type="project" value="TreeGrafter"/>
</dbReference>
<dbReference type="GO" id="GO:0070181">
    <property type="term" value="F:small ribosomal subunit rRNA binding"/>
    <property type="evidence" value="ECO:0007669"/>
    <property type="project" value="UniProtKB-UniRule"/>
</dbReference>
<dbReference type="GO" id="GO:0000028">
    <property type="term" value="P:ribosomal small subunit assembly"/>
    <property type="evidence" value="ECO:0007669"/>
    <property type="project" value="TreeGrafter"/>
</dbReference>
<dbReference type="CDD" id="cd04163">
    <property type="entry name" value="Era"/>
    <property type="match status" value="1"/>
</dbReference>
<dbReference type="CDD" id="cd22534">
    <property type="entry name" value="KH-II_Era"/>
    <property type="match status" value="1"/>
</dbReference>
<dbReference type="FunFam" id="3.30.300.20:FF:000003">
    <property type="entry name" value="GTPase Era"/>
    <property type="match status" value="1"/>
</dbReference>
<dbReference type="FunFam" id="3.40.50.300:FF:000094">
    <property type="entry name" value="GTPase Era"/>
    <property type="match status" value="1"/>
</dbReference>
<dbReference type="Gene3D" id="3.30.300.20">
    <property type="match status" value="1"/>
</dbReference>
<dbReference type="Gene3D" id="3.40.50.300">
    <property type="entry name" value="P-loop containing nucleotide triphosphate hydrolases"/>
    <property type="match status" value="1"/>
</dbReference>
<dbReference type="HAMAP" id="MF_00367">
    <property type="entry name" value="GTPase_Era"/>
    <property type="match status" value="1"/>
</dbReference>
<dbReference type="InterPro" id="IPR030388">
    <property type="entry name" value="G_ERA_dom"/>
</dbReference>
<dbReference type="InterPro" id="IPR006073">
    <property type="entry name" value="GTP-bd"/>
</dbReference>
<dbReference type="InterPro" id="IPR005662">
    <property type="entry name" value="GTPase_Era-like"/>
</dbReference>
<dbReference type="InterPro" id="IPR015946">
    <property type="entry name" value="KH_dom-like_a/b"/>
</dbReference>
<dbReference type="InterPro" id="IPR004044">
    <property type="entry name" value="KH_dom_type_2"/>
</dbReference>
<dbReference type="InterPro" id="IPR009019">
    <property type="entry name" value="KH_sf_prok-type"/>
</dbReference>
<dbReference type="InterPro" id="IPR027417">
    <property type="entry name" value="P-loop_NTPase"/>
</dbReference>
<dbReference type="InterPro" id="IPR005225">
    <property type="entry name" value="Small_GTP-bd"/>
</dbReference>
<dbReference type="NCBIfam" id="TIGR00436">
    <property type="entry name" value="era"/>
    <property type="match status" value="1"/>
</dbReference>
<dbReference type="NCBIfam" id="NF000908">
    <property type="entry name" value="PRK00089.1"/>
    <property type="match status" value="1"/>
</dbReference>
<dbReference type="NCBIfam" id="TIGR00231">
    <property type="entry name" value="small_GTP"/>
    <property type="match status" value="1"/>
</dbReference>
<dbReference type="PANTHER" id="PTHR42698">
    <property type="entry name" value="GTPASE ERA"/>
    <property type="match status" value="1"/>
</dbReference>
<dbReference type="PANTHER" id="PTHR42698:SF1">
    <property type="entry name" value="GTPASE ERA, MITOCHONDRIAL"/>
    <property type="match status" value="1"/>
</dbReference>
<dbReference type="Pfam" id="PF07650">
    <property type="entry name" value="KH_2"/>
    <property type="match status" value="1"/>
</dbReference>
<dbReference type="Pfam" id="PF01926">
    <property type="entry name" value="MMR_HSR1"/>
    <property type="match status" value="1"/>
</dbReference>
<dbReference type="SUPFAM" id="SSF52540">
    <property type="entry name" value="P-loop containing nucleoside triphosphate hydrolases"/>
    <property type="match status" value="1"/>
</dbReference>
<dbReference type="SUPFAM" id="SSF54814">
    <property type="entry name" value="Prokaryotic type KH domain (KH-domain type II)"/>
    <property type="match status" value="1"/>
</dbReference>
<dbReference type="PROSITE" id="PS51713">
    <property type="entry name" value="G_ERA"/>
    <property type="match status" value="1"/>
</dbReference>
<dbReference type="PROSITE" id="PS50823">
    <property type="entry name" value="KH_TYPE_2"/>
    <property type="match status" value="1"/>
</dbReference>
<reference key="1">
    <citation type="journal article" date="2006" name="Mol. Microbiol.">
        <title>Role of pathogenicity island-associated integrases in the genome plasticity of uropathogenic Escherichia coli strain 536.</title>
        <authorList>
            <person name="Hochhut B."/>
            <person name="Wilde C."/>
            <person name="Balling G."/>
            <person name="Middendorf B."/>
            <person name="Dobrindt U."/>
            <person name="Brzuszkiewicz E."/>
            <person name="Gottschalk G."/>
            <person name="Carniel E."/>
            <person name="Hacker J."/>
        </authorList>
    </citation>
    <scope>NUCLEOTIDE SEQUENCE [LARGE SCALE GENOMIC DNA]</scope>
    <source>
        <strain>536 / UPEC</strain>
    </source>
</reference>